<proteinExistence type="evidence at protein level"/>
<name>DPP10_HUMAN</name>
<accession>Q8N608</accession>
<accession>A8K1Q2</accession>
<accession>J3KPP2</accession>
<accession>J3KQ46</accession>
<accession>Q0GLB8</accession>
<accession>Q53QT3</accession>
<accession>Q53S86</accession>
<accession>Q53SL8</accession>
<accession>Q53SS4</accession>
<accession>Q6TTV4</accession>
<accession>Q86YR9</accession>
<accession>Q9P236</accession>
<gene>
    <name type="primary">DPP10</name>
    <name type="synonym">DPRP3</name>
    <name type="synonym">KIAA1492</name>
</gene>
<evidence type="ECO:0000250" key="1">
    <source>
        <dbReference type="UniProtKB" id="P42658"/>
    </source>
</evidence>
<evidence type="ECO:0000250" key="2">
    <source>
        <dbReference type="UniProtKB" id="Q6NXK7"/>
    </source>
</evidence>
<evidence type="ECO:0000255" key="3"/>
<evidence type="ECO:0000269" key="4">
    <source>
    </source>
</evidence>
<evidence type="ECO:0000269" key="5">
    <source>
    </source>
</evidence>
<evidence type="ECO:0000269" key="6">
    <source>
    </source>
</evidence>
<evidence type="ECO:0000269" key="7">
    <source>
    </source>
</evidence>
<evidence type="ECO:0000269" key="8">
    <source>
    </source>
</evidence>
<evidence type="ECO:0000269" key="9">
    <source>
    </source>
</evidence>
<evidence type="ECO:0000269" key="10">
    <source>
    </source>
</evidence>
<evidence type="ECO:0000269" key="11">
    <source>
    </source>
</evidence>
<evidence type="ECO:0000269" key="12">
    <source>
    </source>
</evidence>
<evidence type="ECO:0000269" key="13">
    <source>
    </source>
</evidence>
<evidence type="ECO:0000269" key="14">
    <source>
    </source>
</evidence>
<evidence type="ECO:0000303" key="15">
    <source>
    </source>
</evidence>
<evidence type="ECO:0000303" key="16">
    <source>
    </source>
</evidence>
<evidence type="ECO:0000303" key="17">
    <source>
    </source>
</evidence>
<evidence type="ECO:0000305" key="18"/>
<evidence type="ECO:0007744" key="19">
    <source>
    </source>
</evidence>
<evidence type="ECO:0007829" key="20">
    <source>
        <dbReference type="PDB" id="4WJL"/>
    </source>
</evidence>
<feature type="chain" id="PRO_0000122417" description="Inactive dipeptidyl peptidase 10">
    <location>
        <begin position="1"/>
        <end position="796"/>
    </location>
</feature>
<feature type="topological domain" description="Cytoplasmic" evidence="3">
    <location>
        <begin position="1"/>
        <end position="34"/>
    </location>
</feature>
<feature type="transmembrane region" description="Helical; Signal-anchor for type II membrane protein" evidence="3">
    <location>
        <begin position="35"/>
        <end position="55"/>
    </location>
</feature>
<feature type="topological domain" description="Extracellular" evidence="3">
    <location>
        <begin position="56"/>
        <end position="796"/>
    </location>
</feature>
<feature type="region of interest" description="Mediates effects on KCND2">
    <location>
        <begin position="1"/>
        <end position="56"/>
    </location>
</feature>
<feature type="modified residue" description="Phosphotyrosine" evidence="19">
    <location>
        <position position="138"/>
    </location>
</feature>
<feature type="modified residue" description="Phosphotyrosine" evidence="19">
    <location>
        <position position="143"/>
    </location>
</feature>
<feature type="glycosylation site" description="N-linked (GlcNAc...) asparagine" evidence="14">
    <location>
        <position position="90"/>
    </location>
</feature>
<feature type="glycosylation site" description="N-linked (GlcNAc...) asparagine" evidence="14">
    <location>
        <position position="111"/>
    </location>
</feature>
<feature type="glycosylation site" description="N-linked (GlcNAc...) asparagine" evidence="14">
    <location>
        <position position="119"/>
    </location>
</feature>
<feature type="glycosylation site" description="N-linked (GlcNAc...) asparagine" evidence="14">
    <location>
        <position position="257"/>
    </location>
</feature>
<feature type="glycosylation site" description="N-linked (GlcNAc...) asparagine" evidence="14">
    <location>
        <position position="342"/>
    </location>
</feature>
<feature type="glycosylation site" description="N-linked (GlcNAc...) asparagine" evidence="14">
    <location>
        <position position="748"/>
    </location>
</feature>
<feature type="splice variant" id="VSP_047152" description="In isoform 4." evidence="18">
    <location>
        <begin position="1"/>
        <end position="50"/>
    </location>
</feature>
<feature type="splice variant" id="VSP_013873" description="In isoform 2." evidence="15 16">
    <original>MNQTASVSHHIKCQPSKTIK</original>
    <variation>MRKVESRGEGGRE</variation>
    <location>
        <begin position="1"/>
        <end position="20"/>
    </location>
</feature>
<feature type="splice variant" id="VSP_044466" description="In isoform 3." evidence="17">
    <original>MNQTASVSHHIKCQPSKTIK</original>
    <variation>MTAAKQEPQPTPGARASQAQPADQ</variation>
    <location>
        <begin position="1"/>
        <end position="20"/>
    </location>
</feature>
<feature type="sequence variant" id="VAR_057061" description="In dbSNP:rs2053724." evidence="4 6">
    <original>A</original>
    <variation>P</variation>
    <location>
        <position position="340"/>
    </location>
</feature>
<feature type="sequence variant" id="VAR_059759" description="In dbSNP:rs1446495." evidence="4 5 6 7 8 10 12">
    <original>V</original>
    <variation>I</variation>
    <location>
        <position position="401"/>
    </location>
</feature>
<feature type="sequence variant" id="VAR_057062" description="In dbSNP:rs13421193.">
    <original>S</original>
    <variation>N</variation>
    <location>
        <position position="517"/>
    </location>
</feature>
<feature type="mutagenesis site" description="Abolishes sorting to the cell surface and dimerization." evidence="14">
    <original>N</original>
    <variation>Q</variation>
    <location>
        <position position="257"/>
    </location>
</feature>
<feature type="sequence conflict" description="In Ref. 2; AAO17263, 5; BAF82656 and 7; AAH30832." evidence="18" ref="2 5 7">
    <original>V</original>
    <variation>M</variation>
    <location>
        <position position="288"/>
    </location>
</feature>
<feature type="sequence conflict" description="In Ref. 1; AAQ91190." evidence="18" ref="1">
    <original>F</original>
    <variation>L</variation>
    <location>
        <position position="687"/>
    </location>
</feature>
<feature type="helix" evidence="20">
    <location>
        <begin position="71"/>
        <end position="74"/>
    </location>
</feature>
<feature type="strand" evidence="20">
    <location>
        <begin position="90"/>
        <end position="94"/>
    </location>
</feature>
<feature type="strand" evidence="20">
    <location>
        <begin position="99"/>
        <end position="101"/>
    </location>
</feature>
<feature type="strand" evidence="20">
    <location>
        <begin position="103"/>
        <end position="107"/>
    </location>
</feature>
<feature type="turn" evidence="20">
    <location>
        <begin position="108"/>
        <end position="110"/>
    </location>
</feature>
<feature type="strand" evidence="20">
    <location>
        <begin position="113"/>
        <end position="117"/>
    </location>
</feature>
<feature type="turn" evidence="20">
    <location>
        <begin position="119"/>
        <end position="125"/>
    </location>
</feature>
<feature type="strand" evidence="20">
    <location>
        <begin position="129"/>
        <end position="132"/>
    </location>
</feature>
<feature type="strand" evidence="20">
    <location>
        <begin position="136"/>
        <end position="147"/>
    </location>
</feature>
<feature type="strand" evidence="20">
    <location>
        <begin position="149"/>
        <end position="151"/>
    </location>
</feature>
<feature type="strand" evidence="20">
    <location>
        <begin position="153"/>
        <end position="164"/>
    </location>
</feature>
<feature type="strand" evidence="20">
    <location>
        <begin position="167"/>
        <end position="170"/>
    </location>
</feature>
<feature type="strand" evidence="20">
    <location>
        <begin position="180"/>
        <end position="182"/>
    </location>
</feature>
<feature type="strand" evidence="20">
    <location>
        <begin position="192"/>
        <end position="196"/>
    </location>
</feature>
<feature type="strand" evidence="20">
    <location>
        <begin position="199"/>
        <end position="208"/>
    </location>
</feature>
<feature type="turn" evidence="20">
    <location>
        <begin position="219"/>
        <end position="221"/>
    </location>
</feature>
<feature type="strand" evidence="20">
    <location>
        <begin position="222"/>
        <end position="226"/>
    </location>
</feature>
<feature type="helix" evidence="20">
    <location>
        <begin position="229"/>
        <end position="233"/>
    </location>
</feature>
<feature type="turn" evidence="20">
    <location>
        <begin position="234"/>
        <end position="236"/>
    </location>
</feature>
<feature type="strand" evidence="20">
    <location>
        <begin position="237"/>
        <end position="240"/>
    </location>
</feature>
<feature type="strand" evidence="20">
    <location>
        <begin position="242"/>
        <end position="244"/>
    </location>
</feature>
<feature type="strand" evidence="20">
    <location>
        <begin position="248"/>
        <end position="257"/>
    </location>
</feature>
<feature type="strand" evidence="20">
    <location>
        <begin position="263"/>
        <end position="265"/>
    </location>
</feature>
<feature type="strand" evidence="20">
    <location>
        <begin position="270"/>
        <end position="274"/>
    </location>
</feature>
<feature type="strand" evidence="20">
    <location>
        <begin position="279"/>
        <end position="281"/>
    </location>
</feature>
<feature type="strand" evidence="20">
    <location>
        <begin position="291"/>
        <end position="300"/>
    </location>
</feature>
<feature type="turn" evidence="20">
    <location>
        <begin position="312"/>
        <end position="316"/>
    </location>
</feature>
<feature type="strand" evidence="20">
    <location>
        <begin position="319"/>
        <end position="338"/>
    </location>
</feature>
<feature type="strand" evidence="20">
    <location>
        <begin position="343"/>
        <end position="350"/>
    </location>
</feature>
<feature type="turn" evidence="20">
    <location>
        <begin position="351"/>
        <end position="354"/>
    </location>
</feature>
<feature type="strand" evidence="20">
    <location>
        <begin position="355"/>
        <end position="363"/>
    </location>
</feature>
<feature type="strand" evidence="20">
    <location>
        <begin position="379"/>
        <end position="390"/>
    </location>
</feature>
<feature type="strand" evidence="20">
    <location>
        <begin position="398"/>
        <end position="402"/>
    </location>
</feature>
<feature type="strand" evidence="20">
    <location>
        <begin position="408"/>
        <end position="411"/>
    </location>
</feature>
<feature type="strand" evidence="20">
    <location>
        <begin position="421"/>
        <end position="423"/>
    </location>
</feature>
<feature type="strand" evidence="20">
    <location>
        <begin position="425"/>
        <end position="431"/>
    </location>
</feature>
<feature type="strand" evidence="20">
    <location>
        <begin position="435"/>
        <end position="443"/>
    </location>
</feature>
<feature type="strand" evidence="20">
    <location>
        <begin position="447"/>
        <end position="460"/>
    </location>
</feature>
<feature type="strand" evidence="20">
    <location>
        <begin position="463"/>
        <end position="466"/>
    </location>
</feature>
<feature type="turn" evidence="20">
    <location>
        <begin position="467"/>
        <end position="473"/>
    </location>
</feature>
<feature type="strand" evidence="20">
    <location>
        <begin position="479"/>
        <end position="482"/>
    </location>
</feature>
<feature type="strand" evidence="20">
    <location>
        <begin position="487"/>
        <end position="492"/>
    </location>
</feature>
<feature type="strand" evidence="20">
    <location>
        <begin position="495"/>
        <end position="498"/>
    </location>
</feature>
<feature type="strand" evidence="20">
    <location>
        <begin position="501"/>
        <end position="507"/>
    </location>
</feature>
<feature type="strand" evidence="20">
    <location>
        <begin position="513"/>
        <end position="516"/>
    </location>
</feature>
<feature type="helix" evidence="20">
    <location>
        <begin position="519"/>
        <end position="527"/>
    </location>
</feature>
<feature type="strand" evidence="20">
    <location>
        <begin position="534"/>
        <end position="540"/>
    </location>
</feature>
<feature type="strand" evidence="20">
    <location>
        <begin position="543"/>
        <end position="550"/>
    </location>
</feature>
<feature type="strand" evidence="20">
    <location>
        <begin position="557"/>
        <end position="559"/>
    </location>
</feature>
<feature type="strand" evidence="20">
    <location>
        <begin position="561"/>
        <end position="566"/>
    </location>
</feature>
<feature type="helix" evidence="20">
    <location>
        <begin position="584"/>
        <end position="590"/>
    </location>
</feature>
<feature type="turn" evidence="20">
    <location>
        <begin position="591"/>
        <end position="593"/>
    </location>
</feature>
<feature type="strand" evidence="20">
    <location>
        <begin position="594"/>
        <end position="599"/>
    </location>
</feature>
<feature type="strand" evidence="20">
    <location>
        <begin position="605"/>
        <end position="607"/>
    </location>
</feature>
<feature type="turn" evidence="20">
    <location>
        <begin position="608"/>
        <end position="611"/>
    </location>
</feature>
<feature type="helix" evidence="20">
    <location>
        <begin position="612"/>
        <end position="615"/>
    </location>
</feature>
<feature type="helix" evidence="20">
    <location>
        <begin position="621"/>
        <end position="635"/>
    </location>
</feature>
<feature type="strand" evidence="20">
    <location>
        <begin position="637"/>
        <end position="650"/>
    </location>
</feature>
<feature type="helix" evidence="20">
    <location>
        <begin position="651"/>
        <end position="660"/>
    </location>
</feature>
<feature type="strand" evidence="20">
    <location>
        <begin position="669"/>
        <end position="675"/>
    </location>
</feature>
<feature type="helix" evidence="20">
    <location>
        <begin position="680"/>
        <end position="682"/>
    </location>
</feature>
<feature type="helix" evidence="20">
    <location>
        <begin position="685"/>
        <end position="692"/>
    </location>
</feature>
<feature type="turn" evidence="20">
    <location>
        <begin position="696"/>
        <end position="698"/>
    </location>
</feature>
<feature type="helix" evidence="20">
    <location>
        <begin position="701"/>
        <end position="704"/>
    </location>
</feature>
<feature type="strand" evidence="20">
    <location>
        <begin position="705"/>
        <end position="708"/>
    </location>
</feature>
<feature type="strand" evidence="20">
    <location>
        <begin position="718"/>
        <end position="724"/>
    </location>
</feature>
<feature type="strand" evidence="20">
    <location>
        <begin position="728"/>
        <end position="730"/>
    </location>
</feature>
<feature type="helix" evidence="20">
    <location>
        <begin position="733"/>
        <end position="744"/>
    </location>
</feature>
<feature type="strand" evidence="20">
    <location>
        <begin position="749"/>
        <end position="754"/>
    </location>
</feature>
<feature type="helix" evidence="20">
    <location>
        <begin position="763"/>
        <end position="780"/>
    </location>
</feature>
<feature type="sequence conflict" description="In Ref. 4; ABI16086." evidence="18" ref="4">
    <original>A</original>
    <variation>M</variation>
    <location sequence="Q8N608-3">
        <position position="4"/>
    </location>
</feature>
<dbReference type="EMBL" id="AY387785">
    <property type="protein sequence ID" value="AAQ91190.1"/>
    <property type="molecule type" value="mRNA"/>
</dbReference>
<dbReference type="EMBL" id="AY172661">
    <property type="protein sequence ID" value="AAO17263.2"/>
    <property type="molecule type" value="mRNA"/>
</dbReference>
<dbReference type="EMBL" id="AB040925">
    <property type="protein sequence ID" value="BAA96016.2"/>
    <property type="status" value="ALT_INIT"/>
    <property type="molecule type" value="mRNA"/>
</dbReference>
<dbReference type="EMBL" id="DQ857322">
    <property type="protein sequence ID" value="ABI16086.1"/>
    <property type="molecule type" value="mRNA"/>
</dbReference>
<dbReference type="EMBL" id="AK289967">
    <property type="protein sequence ID" value="BAF82656.1"/>
    <property type="molecule type" value="mRNA"/>
</dbReference>
<dbReference type="EMBL" id="AC010885">
    <property type="status" value="NOT_ANNOTATED_CDS"/>
    <property type="molecule type" value="Genomic_DNA"/>
</dbReference>
<dbReference type="EMBL" id="AC012071">
    <property type="status" value="NOT_ANNOTATED_CDS"/>
    <property type="molecule type" value="Genomic_DNA"/>
</dbReference>
<dbReference type="EMBL" id="AC016721">
    <property type="protein sequence ID" value="AAY15025.1"/>
    <property type="molecule type" value="Genomic_DNA"/>
</dbReference>
<dbReference type="EMBL" id="AC017040">
    <property type="protein sequence ID" value="AAY15032.1"/>
    <property type="molecule type" value="Genomic_DNA"/>
</dbReference>
<dbReference type="EMBL" id="AC066593">
    <property type="status" value="NOT_ANNOTATED_CDS"/>
    <property type="molecule type" value="Genomic_DNA"/>
</dbReference>
<dbReference type="EMBL" id="AC067947">
    <property type="protein sequence ID" value="AAY14685.1"/>
    <property type="molecule type" value="Genomic_DNA"/>
</dbReference>
<dbReference type="EMBL" id="AC068542">
    <property type="status" value="NOT_ANNOTATED_CDS"/>
    <property type="molecule type" value="Genomic_DNA"/>
</dbReference>
<dbReference type="EMBL" id="AC093610">
    <property type="status" value="NOT_ANNOTATED_CDS"/>
    <property type="molecule type" value="Genomic_DNA"/>
</dbReference>
<dbReference type="EMBL" id="AC105422">
    <property type="protein sequence ID" value="AAY24120.1"/>
    <property type="molecule type" value="Genomic_DNA"/>
</dbReference>
<dbReference type="EMBL" id="AC116620">
    <property type="status" value="NOT_ANNOTATED_CDS"/>
    <property type="molecule type" value="Genomic_DNA"/>
</dbReference>
<dbReference type="EMBL" id="AC118276">
    <property type="status" value="NOT_ANNOTATED_CDS"/>
    <property type="molecule type" value="Genomic_DNA"/>
</dbReference>
<dbReference type="EMBL" id="AC118664">
    <property type="status" value="NOT_ANNOTATED_CDS"/>
    <property type="molecule type" value="Genomic_DNA"/>
</dbReference>
<dbReference type="EMBL" id="BC030832">
    <property type="protein sequence ID" value="AAH30832.1"/>
    <property type="molecule type" value="mRNA"/>
</dbReference>
<dbReference type="CCDS" id="CCDS33278.1">
    <molecule id="Q8N608-2"/>
</dbReference>
<dbReference type="CCDS" id="CCDS46400.1">
    <molecule id="Q8N608-1"/>
</dbReference>
<dbReference type="CCDS" id="CCDS54388.1">
    <molecule id="Q8N608-3"/>
</dbReference>
<dbReference type="CCDS" id="CCDS54389.1">
    <molecule id="Q8N608-4"/>
</dbReference>
<dbReference type="RefSeq" id="NP_001004360.3">
    <molecule id="Q8N608-2"/>
    <property type="nucleotide sequence ID" value="NM_001004360.5"/>
</dbReference>
<dbReference type="RefSeq" id="NP_001171505.1">
    <property type="nucleotide sequence ID" value="NM_001178034.1"/>
</dbReference>
<dbReference type="RefSeq" id="NP_001171507.2">
    <molecule id="Q8N608-4"/>
    <property type="nucleotide sequence ID" value="NM_001178036.3"/>
</dbReference>
<dbReference type="RefSeq" id="NP_001308835.2">
    <molecule id="Q8N608-2"/>
    <property type="nucleotide sequence ID" value="NM_001321906.2"/>
</dbReference>
<dbReference type="RefSeq" id="NP_001308839.2">
    <molecule id="Q8N608-4"/>
    <property type="nucleotide sequence ID" value="NM_001321910.3"/>
</dbReference>
<dbReference type="RefSeq" id="NP_001308840.2">
    <molecule id="Q8N608-4"/>
    <property type="nucleotide sequence ID" value="NM_001321911.3"/>
</dbReference>
<dbReference type="RefSeq" id="NP_001308841.1">
    <property type="nucleotide sequence ID" value="NM_001321912.1"/>
</dbReference>
<dbReference type="RefSeq" id="NP_001308842.1">
    <property type="nucleotide sequence ID" value="NM_001321913.1"/>
</dbReference>
<dbReference type="RefSeq" id="NP_001308843.1">
    <property type="nucleotide sequence ID" value="NM_001321914.1"/>
</dbReference>
<dbReference type="RefSeq" id="NP_001386778.1">
    <molecule id="Q8N608-4"/>
    <property type="nucleotide sequence ID" value="NM_001399849.1"/>
</dbReference>
<dbReference type="RefSeq" id="NP_065919.2">
    <molecule id="Q8N608-1"/>
    <property type="nucleotide sequence ID" value="NM_020868.4"/>
</dbReference>
<dbReference type="PDB" id="4WJL">
    <property type="method" value="X-ray"/>
    <property type="resolution" value="3.40 A"/>
    <property type="chains" value="A/B=65-783"/>
</dbReference>
<dbReference type="PDBsum" id="4WJL"/>
<dbReference type="SMR" id="Q8N608"/>
<dbReference type="BioGRID" id="121672">
    <property type="interactions" value="5"/>
</dbReference>
<dbReference type="CORUM" id="Q8N608"/>
<dbReference type="FunCoup" id="Q8N608">
    <property type="interactions" value="308"/>
</dbReference>
<dbReference type="IntAct" id="Q8N608">
    <property type="interactions" value="2"/>
</dbReference>
<dbReference type="STRING" id="9606.ENSP00000376855"/>
<dbReference type="ESTHER" id="human-DPP10">
    <property type="family name" value="DPP4N_Peptidase_S9"/>
</dbReference>
<dbReference type="MEROPS" id="S09.974"/>
<dbReference type="TCDB" id="8.A.51.1.2">
    <property type="family name" value="the dipeptidyl-aminopeptidase-like protein 6 beta subunit of kv4 channels (dpp6) family"/>
</dbReference>
<dbReference type="GlyConnect" id="2050">
    <property type="glycosylation" value="1 N-Linked glycan (1 site)"/>
</dbReference>
<dbReference type="GlyCosmos" id="Q8N608">
    <property type="glycosylation" value="7 sites, 2 glycans"/>
</dbReference>
<dbReference type="GlyGen" id="Q8N608">
    <property type="glycosylation" value="9 sites, 2 N-linked glycans (1 site), 1 O-linked glycan (1 site)"/>
</dbReference>
<dbReference type="iPTMnet" id="Q8N608"/>
<dbReference type="PhosphoSitePlus" id="Q8N608"/>
<dbReference type="BioMuta" id="DPP10"/>
<dbReference type="DMDM" id="296434483"/>
<dbReference type="jPOST" id="Q8N608"/>
<dbReference type="MassIVE" id="Q8N608"/>
<dbReference type="PaxDb" id="9606-ENSP00000376855"/>
<dbReference type="PeptideAtlas" id="Q8N608"/>
<dbReference type="ProteomicsDB" id="72119">
    <molecule id="Q8N608-1"/>
</dbReference>
<dbReference type="ProteomicsDB" id="72120">
    <molecule id="Q8N608-2"/>
</dbReference>
<dbReference type="Antibodypedia" id="18224">
    <property type="antibodies" value="345 antibodies from 34 providers"/>
</dbReference>
<dbReference type="DNASU" id="57628"/>
<dbReference type="Ensembl" id="ENST00000310323.12">
    <molecule id="Q8N608-2"/>
    <property type="protein sequence ID" value="ENSP00000309066.8"/>
    <property type="gene ID" value="ENSG00000175497.17"/>
</dbReference>
<dbReference type="Ensembl" id="ENST00000393147.6">
    <molecule id="Q8N608-3"/>
    <property type="protein sequence ID" value="ENSP00000376855.2"/>
    <property type="gene ID" value="ENSG00000175497.17"/>
</dbReference>
<dbReference type="Ensembl" id="ENST00000409163.5">
    <molecule id="Q8N608-4"/>
    <property type="protein sequence ID" value="ENSP00000387038.1"/>
    <property type="gene ID" value="ENSG00000175497.17"/>
</dbReference>
<dbReference type="Ensembl" id="ENST00000410059.6">
    <molecule id="Q8N608-1"/>
    <property type="protein sequence ID" value="ENSP00000386565.1"/>
    <property type="gene ID" value="ENSG00000175497.17"/>
</dbReference>
<dbReference type="GeneID" id="57628"/>
<dbReference type="KEGG" id="hsa:57628"/>
<dbReference type="MANE-Select" id="ENST00000410059.6">
    <property type="protein sequence ID" value="ENSP00000386565.1"/>
    <property type="RefSeq nucleotide sequence ID" value="NM_020868.6"/>
    <property type="RefSeq protein sequence ID" value="NP_065919.3"/>
</dbReference>
<dbReference type="UCSC" id="uc002tla.3">
    <molecule id="Q8N608-1"/>
    <property type="organism name" value="human"/>
</dbReference>
<dbReference type="AGR" id="HGNC:20823"/>
<dbReference type="CTD" id="57628"/>
<dbReference type="DisGeNET" id="57628"/>
<dbReference type="GeneCards" id="DPP10"/>
<dbReference type="HGNC" id="HGNC:20823">
    <property type="gene designation" value="DPP10"/>
</dbReference>
<dbReference type="HPA" id="ENSG00000175497">
    <property type="expression patterns" value="Group enriched (adrenal gland, brain, pancreas)"/>
</dbReference>
<dbReference type="MalaCards" id="DPP10"/>
<dbReference type="MIM" id="600807">
    <property type="type" value="phenotype"/>
</dbReference>
<dbReference type="MIM" id="608209">
    <property type="type" value="gene"/>
</dbReference>
<dbReference type="neXtProt" id="NX_Q8N608"/>
<dbReference type="OpenTargets" id="ENSG00000175497"/>
<dbReference type="PharmGKB" id="PA134991647"/>
<dbReference type="VEuPathDB" id="HostDB:ENSG00000175497"/>
<dbReference type="eggNOG" id="KOG2100">
    <property type="taxonomic scope" value="Eukaryota"/>
</dbReference>
<dbReference type="GeneTree" id="ENSGT00940000154657"/>
<dbReference type="HOGENOM" id="CLU_006105_4_1_1"/>
<dbReference type="InParanoid" id="Q8N608"/>
<dbReference type="OMA" id="YTSTEHH"/>
<dbReference type="OrthoDB" id="16520at2759"/>
<dbReference type="PAN-GO" id="Q8N608">
    <property type="GO annotations" value="2 GO annotations based on evolutionary models"/>
</dbReference>
<dbReference type="PhylomeDB" id="Q8N608"/>
<dbReference type="TreeFam" id="TF313309"/>
<dbReference type="PathwayCommons" id="Q8N608"/>
<dbReference type="SignaLink" id="Q8N608"/>
<dbReference type="SIGNOR" id="Q8N608"/>
<dbReference type="BioGRID-ORCS" id="57628">
    <property type="hits" value="11 hits in 1145 CRISPR screens"/>
</dbReference>
<dbReference type="ChiTaRS" id="DPP10">
    <property type="organism name" value="human"/>
</dbReference>
<dbReference type="EvolutionaryTrace" id="Q8N608"/>
<dbReference type="GeneWiki" id="DPP10"/>
<dbReference type="GenomeRNAi" id="57628"/>
<dbReference type="Pharos" id="Q8N608">
    <property type="development level" value="Tbio"/>
</dbReference>
<dbReference type="PRO" id="PR:Q8N608"/>
<dbReference type="Proteomes" id="UP000005640">
    <property type="component" value="Chromosome 2"/>
</dbReference>
<dbReference type="RNAct" id="Q8N608">
    <property type="molecule type" value="protein"/>
</dbReference>
<dbReference type="Bgee" id="ENSG00000175497">
    <property type="expression patterns" value="Expressed in adrenal tissue and 127 other cell types or tissues"/>
</dbReference>
<dbReference type="ExpressionAtlas" id="Q8N608">
    <property type="expression patterns" value="baseline and differential"/>
</dbReference>
<dbReference type="GO" id="GO:0016020">
    <property type="term" value="C:membrane"/>
    <property type="evidence" value="ECO:0000314"/>
    <property type="project" value="MGI"/>
</dbReference>
<dbReference type="GO" id="GO:0005886">
    <property type="term" value="C:plasma membrane"/>
    <property type="evidence" value="ECO:0000250"/>
    <property type="project" value="UniProtKB"/>
</dbReference>
<dbReference type="GO" id="GO:0008076">
    <property type="term" value="C:voltage-gated potassium channel complex"/>
    <property type="evidence" value="ECO:0000353"/>
    <property type="project" value="CAFA"/>
</dbReference>
<dbReference type="GO" id="GO:0015459">
    <property type="term" value="F:potassium channel regulator activity"/>
    <property type="evidence" value="ECO:0000250"/>
    <property type="project" value="UniProtKB"/>
</dbReference>
<dbReference type="GO" id="GO:0008236">
    <property type="term" value="F:serine-type peptidase activity"/>
    <property type="evidence" value="ECO:0007669"/>
    <property type="project" value="InterPro"/>
</dbReference>
<dbReference type="GO" id="GO:0044325">
    <property type="term" value="F:transmembrane transporter binding"/>
    <property type="evidence" value="ECO:0000353"/>
    <property type="project" value="CAFA"/>
</dbReference>
<dbReference type="GO" id="GO:1903078">
    <property type="term" value="P:positive regulation of protein localization to plasma membrane"/>
    <property type="evidence" value="ECO:0000314"/>
    <property type="project" value="CACAO"/>
</dbReference>
<dbReference type="GO" id="GO:0072659">
    <property type="term" value="P:protein localization to plasma membrane"/>
    <property type="evidence" value="ECO:0000250"/>
    <property type="project" value="UniProtKB"/>
</dbReference>
<dbReference type="GO" id="GO:0006508">
    <property type="term" value="P:proteolysis"/>
    <property type="evidence" value="ECO:0007669"/>
    <property type="project" value="InterPro"/>
</dbReference>
<dbReference type="GO" id="GO:1901379">
    <property type="term" value="P:regulation of potassium ion transmembrane transport"/>
    <property type="evidence" value="ECO:0000250"/>
    <property type="project" value="UniProtKB"/>
</dbReference>
<dbReference type="FunFam" id="2.140.10.30:FF:000001">
    <property type="entry name" value="Dipeptidyl peptidase 4"/>
    <property type="match status" value="1"/>
</dbReference>
<dbReference type="FunFam" id="3.40.50.1820:FF:000003">
    <property type="entry name" value="Dipeptidyl peptidase 4"/>
    <property type="match status" value="1"/>
</dbReference>
<dbReference type="Gene3D" id="3.40.50.1820">
    <property type="entry name" value="alpha/beta hydrolase"/>
    <property type="match status" value="1"/>
</dbReference>
<dbReference type="Gene3D" id="2.140.10.30">
    <property type="entry name" value="Dipeptidylpeptidase IV, N-terminal domain"/>
    <property type="match status" value="1"/>
</dbReference>
<dbReference type="InterPro" id="IPR029058">
    <property type="entry name" value="AB_hydrolase_fold"/>
</dbReference>
<dbReference type="InterPro" id="IPR001375">
    <property type="entry name" value="Peptidase_S9_cat"/>
</dbReference>
<dbReference type="InterPro" id="IPR002469">
    <property type="entry name" value="Peptidase_S9B_N"/>
</dbReference>
<dbReference type="InterPro" id="IPR050278">
    <property type="entry name" value="Serine_Prot_S9B/DPPIV"/>
</dbReference>
<dbReference type="PANTHER" id="PTHR11731:SF21">
    <property type="entry name" value="INACTIVE DIPEPTIDYL PEPTIDASE 10"/>
    <property type="match status" value="1"/>
</dbReference>
<dbReference type="PANTHER" id="PTHR11731">
    <property type="entry name" value="PROTEASE FAMILY S9B,C DIPEPTIDYL-PEPTIDASE IV-RELATED"/>
    <property type="match status" value="1"/>
</dbReference>
<dbReference type="Pfam" id="PF00930">
    <property type="entry name" value="DPPIV_N"/>
    <property type="match status" value="1"/>
</dbReference>
<dbReference type="Pfam" id="PF00326">
    <property type="entry name" value="Peptidase_S9"/>
    <property type="match status" value="1"/>
</dbReference>
<dbReference type="SUPFAM" id="SSF53474">
    <property type="entry name" value="alpha/beta-Hydrolases"/>
    <property type="match status" value="1"/>
</dbReference>
<dbReference type="SUPFAM" id="SSF82171">
    <property type="entry name" value="DPP6 N-terminal domain-like"/>
    <property type="match status" value="1"/>
</dbReference>
<protein>
    <recommendedName>
        <fullName>Inactive dipeptidyl peptidase 10</fullName>
    </recommendedName>
    <alternativeName>
        <fullName>Dipeptidyl peptidase IV-related protein 3</fullName>
        <shortName>DPRP-3</shortName>
    </alternativeName>
    <alternativeName>
        <fullName>Dipeptidyl peptidase X</fullName>
        <shortName>DPP X</shortName>
    </alternativeName>
    <alternativeName>
        <fullName>Dipeptidyl peptidase-like protein 2</fullName>
        <shortName>DPL2</shortName>
    </alternativeName>
</protein>
<comment type="function">
    <text evidence="5 9 11">Promotes cell surface expression of the potassium channel KCND2 (PubMed:15454437). Modulates the activity and gating characteristics of the potassium channel KCND2 (PubMed:15454437). Has no dipeptidyl aminopeptidase activity (PubMed:12662155).</text>
</comment>
<comment type="subunit">
    <text evidence="7 9 18">May form oligomers. Interacts with KCND1 (Probable). Interacts with KCND2.</text>
</comment>
<comment type="subcellular location">
    <subcellularLocation>
        <location evidence="2 7">Cell membrane</location>
        <topology evidence="1">Single-pass type II membrane protein</topology>
    </subcellularLocation>
</comment>
<comment type="alternative products">
    <event type="alternative splicing"/>
    <isoform>
        <id>Q8N608-1</id>
        <name>1</name>
        <sequence type="displayed"/>
    </isoform>
    <isoform>
        <id>Q8N608-2</id>
        <name>2</name>
        <sequence type="described" ref="VSP_013873"/>
    </isoform>
    <isoform>
        <id>Q8N608-3</id>
        <name>3</name>
        <sequence type="described" ref="VSP_044466"/>
    </isoform>
    <isoform>
        <id>Q8N608-4</id>
        <name>4</name>
        <sequence type="described" ref="VSP_047152"/>
    </isoform>
    <text>Additional isoforms seem to exist, which may have different subcellular locations.</text>
</comment>
<comment type="tissue specificity">
    <text evidence="5 7">Found in serum, T-cells and brain (at protein level). Expressed in brain, pancreas, spinal cord and adrenal glands.</text>
</comment>
<comment type="PTM">
    <text evidence="9 14">N-glycosylation is important for cell surface expression, specially at Asn-257, which is crucial.</text>
</comment>
<comment type="disease" evidence="7 13">
    <disease id="DI-02482">
        <name>Asthma</name>
        <acronym>ASTHMA</acronym>
        <description>The most common chronic disease affecting children and young adults. It is a complex genetic disorder with a heterogeneous phenotype, largely attributed to the interactions among many genes and between these genes and the environment. It is characterized by recurrent attacks of paroxysmal dyspnea, with wheezing due to spasmodic contraction of the bronchi.</description>
        <dbReference type="MIM" id="600807"/>
    </disease>
    <text>Disease susceptibility is associated with variants affecting the gene represented in this entry.</text>
</comment>
<comment type="similarity">
    <text evidence="18">Belongs to the peptidase S9B family. DPPIV subfamily.</text>
</comment>
<comment type="caution">
    <text evidence="18">Gly-651 is present instead of the conserved Ser which is expected to be an active site residue suggesting that this protein has no peptidase activity.</text>
</comment>
<comment type="sequence caution" evidence="18">
    <conflict type="erroneous initiation">
        <sequence resource="EMBL-CDS" id="BAA96016"/>
    </conflict>
    <text>Extended N-terminus.</text>
</comment>
<keyword id="KW-0002">3D-structure</keyword>
<keyword id="KW-0025">Alternative splicing</keyword>
<keyword id="KW-1058">Asthma</keyword>
<keyword id="KW-1003">Cell membrane</keyword>
<keyword id="KW-0325">Glycoprotein</keyword>
<keyword id="KW-0472">Membrane</keyword>
<keyword id="KW-0597">Phosphoprotein</keyword>
<keyword id="KW-1267">Proteomics identification</keyword>
<keyword id="KW-1185">Reference proteome</keyword>
<keyword id="KW-0735">Signal-anchor</keyword>
<keyword id="KW-0812">Transmembrane</keyword>
<keyword id="KW-1133">Transmembrane helix</keyword>
<sequence>MNQTASVSHHIKCQPSKTIKELGSNSPPQRNWKGIAIALLVILVVCSLITMSVILLTPDELTNSSETRLSLEDLFRKDFVLHDPEARWINDTDVVYKSENGHVIKLNIETNATTLLLENTTFVTFKASRHSVSPDLKYVLLAYDVKQIFHYSYTASYVIYNIHTREVWELNPPEVEDSVLQYAAWGVQGQQLIYIFENNIYYQPDIKSSSLRLTSSGKEEIIFNGIADWLYEEELLHSHIAHWWSPDGERLAFLMINDSLVPTMVIPRFTGALYPKGKQYPYPKAGQVNPTIKLYVVNLYGPTHTLELMPPDSFKSREYYITMVKWVSNTKTVVRWLNRAQNISILTVCETTTGACSKKYEMTSDTWLSQQNEEPVFSRDGSKFFMTVPVKQGGRGEFHHVAMFLIQSKSEQITVRHLTSGNWEVIKILAYDETTQKIYFLSTESSPRGRQLYSASTEGLLNRQCISCNFMKEQCTYFDASFSPMNQHFLLFCEGPRVPVVSLHSTDNPAKYFILESNSMLKEAILKKKIGKPEIKILHIDDYELPLQLSLPKDFMDRNQYALLLIMDEEPGGQLVTDKFHIDWDSVLIDMDNVIVARFDGRGSGFQGLKILQEIHRRLGSVEVKDQITAVKFLLKLPYIDSKRLSIFGKGYGGYIASMILKSDEKLFKCGSVVAPITDLKLYASAFSERYLGMPSKEESTYQAASVLHNVHGLKEENILIIHGTADTKVHFQHSAELIKHLIKAGVNYTMQVYPDEGHNVSEKSKYHLYSTILKFFSDCLKEEISVLPQEPEEDE</sequence>
<organism>
    <name type="scientific">Homo sapiens</name>
    <name type="common">Human</name>
    <dbReference type="NCBI Taxonomy" id="9606"/>
    <lineage>
        <taxon>Eukaryota</taxon>
        <taxon>Metazoa</taxon>
        <taxon>Chordata</taxon>
        <taxon>Craniata</taxon>
        <taxon>Vertebrata</taxon>
        <taxon>Euteleostomi</taxon>
        <taxon>Mammalia</taxon>
        <taxon>Eutheria</taxon>
        <taxon>Euarchontoglires</taxon>
        <taxon>Primates</taxon>
        <taxon>Haplorrhini</taxon>
        <taxon>Catarrhini</taxon>
        <taxon>Hominidae</taxon>
        <taxon>Homo</taxon>
    </lineage>
</organism>
<reference key="1">
    <citation type="journal article" date="2003" name="Adv. Exp. Med. Biol.">
        <title>Dipeptidyl peptidase IV gene family. The DPIV family.</title>
        <authorList>
            <person name="Chen T."/>
            <person name="Ajami K."/>
            <person name="McCaughan G.W."/>
            <person name="Gorrell M.D."/>
            <person name="Abbott C.A."/>
        </authorList>
    </citation>
    <scope>NUCLEOTIDE SEQUENCE [MRNA] (ISOFORM 2)</scope>
    <scope>VARIANTS PRO-340 AND ILE-401</scope>
    <source>
        <tissue>Brain</tissue>
    </source>
</reference>
<reference key="2">
    <citation type="journal article" date="2003" name="Biochem. J.">
        <title>Cloning and characterization of dipeptidyl peptidase 10, a new member of an emerging subgroup of serine proteases.</title>
        <authorList>
            <person name="Qi S.Y."/>
            <person name="Riviere P.J."/>
            <person name="Trojnar J."/>
            <person name="Junien J.-L."/>
            <person name="Akinsanya K.O."/>
        </authorList>
    </citation>
    <scope>NUCLEOTIDE SEQUENCE [MRNA] (ISOFORM 1)</scope>
    <scope>FUNCTION</scope>
    <scope>TISSUE SPECIFICITY</scope>
    <scope>LACK OF ENZYME ACTIVITY</scope>
    <scope>VARIANT ILE-401</scope>
    <source>
        <tissue>Hypothalamus</tissue>
    </source>
</reference>
<reference key="3">
    <citation type="journal article" date="2003" name="Nat. Genet.">
        <title>Positional cloning of a novel gene influencing asthma from chromosome 2q14.</title>
        <authorList>
            <person name="Allen M."/>
            <person name="Heinzmann A."/>
            <person name="Noguchi E."/>
            <person name="Abecasis G."/>
            <person name="Broxholme J."/>
            <person name="Ponting C.P."/>
            <person name="Bhattacharyya S."/>
            <person name="Tinsley J."/>
            <person name="Zhang Y."/>
            <person name="Holt R."/>
            <person name="Jones E.Y."/>
            <person name="Lench N."/>
            <person name="Carey A."/>
            <person name="Jones H."/>
            <person name="Dickens N.J."/>
            <person name="Dimon C."/>
            <person name="Nicholls R."/>
            <person name="Baker C."/>
            <person name="Xue L."/>
            <person name="Townsend E."/>
            <person name="Kabesch M."/>
            <person name="Weiland S.K."/>
            <person name="Carr D."/>
            <person name="von Mutius E."/>
            <person name="Adcock I.M."/>
            <person name="Barnes P.J."/>
            <person name="Lathrop G.M."/>
            <person name="Edwards M."/>
            <person name="Moffatt M.F."/>
            <person name="Cookson W.O.C.M."/>
        </authorList>
    </citation>
    <scope>NUCLEOTIDE SEQUENCE [MRNA] (ISOFORM 1)</scope>
    <scope>ALTERNATIVE SPLICING</scope>
    <scope>SUBUNIT</scope>
    <scope>SUBCELLULAR LOCATION</scope>
    <scope>TISSUE SPECIFICITY</scope>
    <scope>INVOLVEMENT IN ASTHMA</scope>
    <scope>VARIANT ILE-401</scope>
</reference>
<reference key="4">
    <citation type="journal article" date="2006" name="Biochem. Biophys. Res. Commun.">
        <title>Species and tissue differences in the expression of DPPY splicing variants.</title>
        <authorList>
            <person name="Takimoto K."/>
            <person name="Hayashi Y."/>
            <person name="Ren X."/>
            <person name="Yoshimura N."/>
        </authorList>
    </citation>
    <scope>NUCLEOTIDE SEQUENCE [MRNA] (ISOFORM 3)</scope>
    <scope>VARIANT ILE-401</scope>
    <scope>ALTERNATIVE SPLICING</scope>
</reference>
<reference key="5">
    <citation type="journal article" date="2000" name="DNA Res.">
        <title>Prediction of the coding sequences of unidentified human genes. XVII. The complete sequences of 100 new cDNA clones from brain which code for large proteins in vitro.</title>
        <authorList>
            <person name="Nagase T."/>
            <person name="Kikuno R."/>
            <person name="Ishikawa K."/>
            <person name="Hirosawa M."/>
            <person name="Ohara O."/>
        </authorList>
    </citation>
    <scope>NUCLEOTIDE SEQUENCE [LARGE SCALE MRNA] (ISOFORM 2)</scope>
    <scope>VARIANTS PRO-340 AND ILE-401</scope>
    <source>
        <tissue>Brain</tissue>
    </source>
</reference>
<reference key="6">
    <citation type="journal article" date="2004" name="Nat. Genet.">
        <title>Complete sequencing and characterization of 21,243 full-length human cDNAs.</title>
        <authorList>
            <person name="Ota T."/>
            <person name="Suzuki Y."/>
            <person name="Nishikawa T."/>
            <person name="Otsuki T."/>
            <person name="Sugiyama T."/>
            <person name="Irie R."/>
            <person name="Wakamatsu A."/>
            <person name="Hayashi K."/>
            <person name="Sato H."/>
            <person name="Nagai K."/>
            <person name="Kimura K."/>
            <person name="Makita H."/>
            <person name="Sekine M."/>
            <person name="Obayashi M."/>
            <person name="Nishi T."/>
            <person name="Shibahara T."/>
            <person name="Tanaka T."/>
            <person name="Ishii S."/>
            <person name="Yamamoto J."/>
            <person name="Saito K."/>
            <person name="Kawai Y."/>
            <person name="Isono Y."/>
            <person name="Nakamura Y."/>
            <person name="Nagahari K."/>
            <person name="Murakami K."/>
            <person name="Yasuda T."/>
            <person name="Iwayanagi T."/>
            <person name="Wagatsuma M."/>
            <person name="Shiratori A."/>
            <person name="Sudo H."/>
            <person name="Hosoiri T."/>
            <person name="Kaku Y."/>
            <person name="Kodaira H."/>
            <person name="Kondo H."/>
            <person name="Sugawara M."/>
            <person name="Takahashi M."/>
            <person name="Kanda K."/>
            <person name="Yokoi T."/>
            <person name="Furuya T."/>
            <person name="Kikkawa E."/>
            <person name="Omura Y."/>
            <person name="Abe K."/>
            <person name="Kamihara K."/>
            <person name="Katsuta N."/>
            <person name="Sato K."/>
            <person name="Tanikawa M."/>
            <person name="Yamazaki M."/>
            <person name="Ninomiya K."/>
            <person name="Ishibashi T."/>
            <person name="Yamashita H."/>
            <person name="Murakawa K."/>
            <person name="Fujimori K."/>
            <person name="Tanai H."/>
            <person name="Kimata M."/>
            <person name="Watanabe M."/>
            <person name="Hiraoka S."/>
            <person name="Chiba Y."/>
            <person name="Ishida S."/>
            <person name="Ono Y."/>
            <person name="Takiguchi S."/>
            <person name="Watanabe S."/>
            <person name="Yosida M."/>
            <person name="Hotuta T."/>
            <person name="Kusano J."/>
            <person name="Kanehori K."/>
            <person name="Takahashi-Fujii A."/>
            <person name="Hara H."/>
            <person name="Tanase T.-O."/>
            <person name="Nomura Y."/>
            <person name="Togiya S."/>
            <person name="Komai F."/>
            <person name="Hara R."/>
            <person name="Takeuchi K."/>
            <person name="Arita M."/>
            <person name="Imose N."/>
            <person name="Musashino K."/>
            <person name="Yuuki H."/>
            <person name="Oshima A."/>
            <person name="Sasaki N."/>
            <person name="Aotsuka S."/>
            <person name="Yoshikawa Y."/>
            <person name="Matsunawa H."/>
            <person name="Ichihara T."/>
            <person name="Shiohata N."/>
            <person name="Sano S."/>
            <person name="Moriya S."/>
            <person name="Momiyama H."/>
            <person name="Satoh N."/>
            <person name="Takami S."/>
            <person name="Terashima Y."/>
            <person name="Suzuki O."/>
            <person name="Nakagawa S."/>
            <person name="Senoh A."/>
            <person name="Mizoguchi H."/>
            <person name="Goto Y."/>
            <person name="Shimizu F."/>
            <person name="Wakebe H."/>
            <person name="Hishigaki H."/>
            <person name="Watanabe T."/>
            <person name="Sugiyama A."/>
            <person name="Takemoto M."/>
            <person name="Kawakami B."/>
            <person name="Yamazaki M."/>
            <person name="Watanabe K."/>
            <person name="Kumagai A."/>
            <person name="Itakura S."/>
            <person name="Fukuzumi Y."/>
            <person name="Fujimori Y."/>
            <person name="Komiyama M."/>
            <person name="Tashiro H."/>
            <person name="Tanigami A."/>
            <person name="Fujiwara T."/>
            <person name="Ono T."/>
            <person name="Yamada K."/>
            <person name="Fujii Y."/>
            <person name="Ozaki K."/>
            <person name="Hirao M."/>
            <person name="Ohmori Y."/>
            <person name="Kawabata A."/>
            <person name="Hikiji T."/>
            <person name="Kobatake N."/>
            <person name="Inagaki H."/>
            <person name="Ikema Y."/>
            <person name="Okamoto S."/>
            <person name="Okitani R."/>
            <person name="Kawakami T."/>
            <person name="Noguchi S."/>
            <person name="Itoh T."/>
            <person name="Shigeta K."/>
            <person name="Senba T."/>
            <person name="Matsumura K."/>
            <person name="Nakajima Y."/>
            <person name="Mizuno T."/>
            <person name="Morinaga M."/>
            <person name="Sasaki M."/>
            <person name="Togashi T."/>
            <person name="Oyama M."/>
            <person name="Hata H."/>
            <person name="Watanabe M."/>
            <person name="Komatsu T."/>
            <person name="Mizushima-Sugano J."/>
            <person name="Satoh T."/>
            <person name="Shirai Y."/>
            <person name="Takahashi Y."/>
            <person name="Nakagawa K."/>
            <person name="Okumura K."/>
            <person name="Nagase T."/>
            <person name="Nomura N."/>
            <person name="Kikuchi H."/>
            <person name="Masuho Y."/>
            <person name="Yamashita R."/>
            <person name="Nakai K."/>
            <person name="Yada T."/>
            <person name="Nakamura Y."/>
            <person name="Ohara O."/>
            <person name="Isogai T."/>
            <person name="Sugano S."/>
        </authorList>
    </citation>
    <scope>NUCLEOTIDE SEQUENCE [LARGE SCALE MRNA] (ISOFORM 1)</scope>
    <scope>VARIANT ILE-401</scope>
    <source>
        <tissue>Hippocampus</tissue>
    </source>
</reference>
<reference key="7">
    <citation type="journal article" date="2005" name="Nature">
        <title>Generation and annotation of the DNA sequences of human chromosomes 2 and 4.</title>
        <authorList>
            <person name="Hillier L.W."/>
            <person name="Graves T.A."/>
            <person name="Fulton R.S."/>
            <person name="Fulton L.A."/>
            <person name="Pepin K.H."/>
            <person name="Minx P."/>
            <person name="Wagner-McPherson C."/>
            <person name="Layman D."/>
            <person name="Wylie K."/>
            <person name="Sekhon M."/>
            <person name="Becker M.C."/>
            <person name="Fewell G.A."/>
            <person name="Delehaunty K.D."/>
            <person name="Miner T.L."/>
            <person name="Nash W.E."/>
            <person name="Kremitzki C."/>
            <person name="Oddy L."/>
            <person name="Du H."/>
            <person name="Sun H."/>
            <person name="Bradshaw-Cordum H."/>
            <person name="Ali J."/>
            <person name="Carter J."/>
            <person name="Cordes M."/>
            <person name="Harris A."/>
            <person name="Isak A."/>
            <person name="van Brunt A."/>
            <person name="Nguyen C."/>
            <person name="Du F."/>
            <person name="Courtney L."/>
            <person name="Kalicki J."/>
            <person name="Ozersky P."/>
            <person name="Abbott S."/>
            <person name="Armstrong J."/>
            <person name="Belter E.A."/>
            <person name="Caruso L."/>
            <person name="Cedroni M."/>
            <person name="Cotton M."/>
            <person name="Davidson T."/>
            <person name="Desai A."/>
            <person name="Elliott G."/>
            <person name="Erb T."/>
            <person name="Fronick C."/>
            <person name="Gaige T."/>
            <person name="Haakenson W."/>
            <person name="Haglund K."/>
            <person name="Holmes A."/>
            <person name="Harkins R."/>
            <person name="Kim K."/>
            <person name="Kruchowski S.S."/>
            <person name="Strong C.M."/>
            <person name="Grewal N."/>
            <person name="Goyea E."/>
            <person name="Hou S."/>
            <person name="Levy A."/>
            <person name="Martinka S."/>
            <person name="Mead K."/>
            <person name="McLellan M.D."/>
            <person name="Meyer R."/>
            <person name="Randall-Maher J."/>
            <person name="Tomlinson C."/>
            <person name="Dauphin-Kohlberg S."/>
            <person name="Kozlowicz-Reilly A."/>
            <person name="Shah N."/>
            <person name="Swearengen-Shahid S."/>
            <person name="Snider J."/>
            <person name="Strong J.T."/>
            <person name="Thompson J."/>
            <person name="Yoakum M."/>
            <person name="Leonard S."/>
            <person name="Pearman C."/>
            <person name="Trani L."/>
            <person name="Radionenko M."/>
            <person name="Waligorski J.E."/>
            <person name="Wang C."/>
            <person name="Rock S.M."/>
            <person name="Tin-Wollam A.-M."/>
            <person name="Maupin R."/>
            <person name="Latreille P."/>
            <person name="Wendl M.C."/>
            <person name="Yang S.-P."/>
            <person name="Pohl C."/>
            <person name="Wallis J.W."/>
            <person name="Spieth J."/>
            <person name="Bieri T.A."/>
            <person name="Berkowicz N."/>
            <person name="Nelson J.O."/>
            <person name="Osborne J."/>
            <person name="Ding L."/>
            <person name="Meyer R."/>
            <person name="Sabo A."/>
            <person name="Shotland Y."/>
            <person name="Sinha P."/>
            <person name="Wohldmann P.E."/>
            <person name="Cook L.L."/>
            <person name="Hickenbotham M.T."/>
            <person name="Eldred J."/>
            <person name="Williams D."/>
            <person name="Jones T.A."/>
            <person name="She X."/>
            <person name="Ciccarelli F.D."/>
            <person name="Izaurralde E."/>
            <person name="Taylor J."/>
            <person name="Schmutz J."/>
            <person name="Myers R.M."/>
            <person name="Cox D.R."/>
            <person name="Huang X."/>
            <person name="McPherson J.D."/>
            <person name="Mardis E.R."/>
            <person name="Clifton S.W."/>
            <person name="Warren W.C."/>
            <person name="Chinwalla A.T."/>
            <person name="Eddy S.R."/>
            <person name="Marra M.A."/>
            <person name="Ovcharenko I."/>
            <person name="Furey T.S."/>
            <person name="Miller W."/>
            <person name="Eichler E.E."/>
            <person name="Bork P."/>
            <person name="Suyama M."/>
            <person name="Torrents D."/>
            <person name="Waterston R.H."/>
            <person name="Wilson R.K."/>
        </authorList>
    </citation>
    <scope>NUCLEOTIDE SEQUENCE [LARGE SCALE GENOMIC DNA]</scope>
</reference>
<reference key="8">
    <citation type="journal article" date="2004" name="Genome Res.">
        <title>The status, quality, and expansion of the NIH full-length cDNA project: the Mammalian Gene Collection (MGC).</title>
        <authorList>
            <consortium name="The MGC Project Team"/>
        </authorList>
    </citation>
    <scope>NUCLEOTIDE SEQUENCE [LARGE SCALE MRNA] (ISOFORM 1)</scope>
    <scope>VARIANT ILE-401</scope>
    <source>
        <tissue>Brain</tissue>
    </source>
</reference>
<reference key="9">
    <citation type="journal article" date="2004" name="Biophys. J.">
        <title>Modulation of Kv4.2 channel expression and gating by dipeptidyl peptidase 10 (DPP10).</title>
        <authorList>
            <person name="Jerng H.H."/>
            <person name="Qian Y."/>
            <person name="Pfaffinger P.J."/>
        </authorList>
    </citation>
    <scope>FUNCTION</scope>
    <scope>GLYCOSYLATION</scope>
    <scope>INTERACTION WITH KCND1 AND KCND2</scope>
</reference>
<reference key="10">
    <citation type="journal article" date="2005" name="J. Biol. Chem.">
        <title>DPP10 modulates Kv4-mediated A-type potassium channels.</title>
        <authorList>
            <person name="Zagha E."/>
            <person name="Ozaita A."/>
            <person name="Chang S.Y."/>
            <person name="Nadal M.S."/>
            <person name="Lin U."/>
            <person name="Saganich M.J."/>
            <person name="McCormack T."/>
            <person name="Akinsanya K.O."/>
            <person name="Qi S.Y."/>
            <person name="Rudy B."/>
        </authorList>
    </citation>
    <scope>FUNCTION</scope>
</reference>
<reference key="11">
    <citation type="journal article" date="2008" name="Proc. Natl. Acad. Sci. U.S.A.">
        <title>A quantitative atlas of mitotic phosphorylation.</title>
        <authorList>
            <person name="Dephoure N."/>
            <person name="Zhou C."/>
            <person name="Villen J."/>
            <person name="Beausoleil S.A."/>
            <person name="Bakalarski C.E."/>
            <person name="Elledge S.J."/>
            <person name="Gygi S.P."/>
        </authorList>
    </citation>
    <scope>PHOSPHORYLATION [LARGE SCALE ANALYSIS] AT TYR-138 AND TYR-143</scope>
    <scope>IDENTIFICATION BY MASS SPECTROMETRY [LARGE SCALE ANALYSIS]</scope>
    <source>
        <tissue>Cervix carcinoma</tissue>
    </source>
</reference>
<reference key="12">
    <citation type="journal article" date="2009" name="Thorax">
        <title>Positionally cloned asthma susceptibility gene polymorphisms and disease risk in the British 1958 Birth Cohort.</title>
        <authorList>
            <person name="Blakey J.D."/>
            <person name="Sayers I."/>
            <person name="Ring S.M."/>
            <person name="Strachan D.P."/>
            <person name="Hall I.P."/>
        </authorList>
    </citation>
    <scope>INVOLVEMENT IN SUSCEPTIBILITY TO ASTHMA</scope>
</reference>
<reference key="13">
    <citation type="journal article" date="2012" name="Int. J. Biochem. Cell Biol.">
        <title>N-glycosylation of the mammalian dipeptidyl aminopeptidase-like protein 10 (DPP10) regulates trafficking and interaction with Kv4 channels.</title>
        <authorList>
            <person name="Cotella D."/>
            <person name="Radicke S."/>
            <person name="Cipriani V."/>
            <person name="Cavaletto M."/>
            <person name="Merlin S."/>
            <person name="Follenzi A."/>
            <person name="Ravens U."/>
            <person name="Wettwer E."/>
            <person name="Santoro C."/>
            <person name="Sblattero D."/>
        </authorList>
    </citation>
    <scope>GLYCOSYLATION AT ASN-90; ASN-111; ASN-119; ASN-257; ASN-342 AND ASN-748</scope>
    <scope>MUTAGENESIS OF ASN-257</scope>
</reference>